<comment type="function">
    <text evidence="1">Catalyzes the transfer of the enolpyruvyl moiety of phosphoenolpyruvate (PEP) to the 5-hydroxyl of shikimate-3-phosphate (S3P) to produce enolpyruvyl shikimate-3-phosphate and inorganic phosphate.</text>
</comment>
<comment type="catalytic activity">
    <reaction evidence="1">
        <text>3-phosphoshikimate + phosphoenolpyruvate = 5-O-(1-carboxyvinyl)-3-phosphoshikimate + phosphate</text>
        <dbReference type="Rhea" id="RHEA:21256"/>
        <dbReference type="ChEBI" id="CHEBI:43474"/>
        <dbReference type="ChEBI" id="CHEBI:57701"/>
        <dbReference type="ChEBI" id="CHEBI:58702"/>
        <dbReference type="ChEBI" id="CHEBI:145989"/>
        <dbReference type="EC" id="2.5.1.19"/>
    </reaction>
    <physiologicalReaction direction="left-to-right" evidence="1">
        <dbReference type="Rhea" id="RHEA:21257"/>
    </physiologicalReaction>
</comment>
<comment type="pathway">
    <text evidence="1">Metabolic intermediate biosynthesis; chorismate biosynthesis.</text>
</comment>
<comment type="subunit">
    <text evidence="1">Monomer.</text>
</comment>
<comment type="subcellular location">
    <subcellularLocation>
        <location evidence="1">Cytoplasm</location>
    </subcellularLocation>
</comment>
<comment type="similarity">
    <text evidence="1 2">Belongs to the EPSP synthase family.</text>
</comment>
<dbReference type="EC" id="2.5.1.19" evidence="1"/>
<dbReference type="EMBL" id="AL445063">
    <property type="protein sequence ID" value="CAC11427.1"/>
    <property type="molecule type" value="Genomic_DNA"/>
</dbReference>
<dbReference type="RefSeq" id="WP_010900711.1">
    <property type="nucleotide sequence ID" value="NC_002578.1"/>
</dbReference>
<dbReference type="SMR" id="Q9HLE6"/>
<dbReference type="FunCoup" id="Q9HLE6">
    <property type="interactions" value="108"/>
</dbReference>
<dbReference type="STRING" id="273075.gene:9571499"/>
<dbReference type="PaxDb" id="273075-Ta0282"/>
<dbReference type="DNASU" id="1455911"/>
<dbReference type="EnsemblBacteria" id="CAC11427">
    <property type="protein sequence ID" value="CAC11427"/>
    <property type="gene ID" value="CAC11427"/>
</dbReference>
<dbReference type="KEGG" id="tac:Ta0282"/>
<dbReference type="eggNOG" id="arCOG04134">
    <property type="taxonomic scope" value="Archaea"/>
</dbReference>
<dbReference type="HOGENOM" id="CLU_024321_0_0_2"/>
<dbReference type="InParanoid" id="Q9HLE6"/>
<dbReference type="OrthoDB" id="43788at2157"/>
<dbReference type="UniPathway" id="UPA00053"/>
<dbReference type="Proteomes" id="UP000001024">
    <property type="component" value="Chromosome"/>
</dbReference>
<dbReference type="GO" id="GO:0005737">
    <property type="term" value="C:cytoplasm"/>
    <property type="evidence" value="ECO:0007669"/>
    <property type="project" value="UniProtKB-SubCell"/>
</dbReference>
<dbReference type="GO" id="GO:0003866">
    <property type="term" value="F:3-phosphoshikimate 1-carboxyvinyltransferase activity"/>
    <property type="evidence" value="ECO:0007669"/>
    <property type="project" value="UniProtKB-UniRule"/>
</dbReference>
<dbReference type="GO" id="GO:0008652">
    <property type="term" value="P:amino acid biosynthetic process"/>
    <property type="evidence" value="ECO:0007669"/>
    <property type="project" value="UniProtKB-KW"/>
</dbReference>
<dbReference type="GO" id="GO:0009073">
    <property type="term" value="P:aromatic amino acid family biosynthetic process"/>
    <property type="evidence" value="ECO:0007669"/>
    <property type="project" value="UniProtKB-KW"/>
</dbReference>
<dbReference type="GO" id="GO:0009423">
    <property type="term" value="P:chorismate biosynthetic process"/>
    <property type="evidence" value="ECO:0007669"/>
    <property type="project" value="UniProtKB-UniRule"/>
</dbReference>
<dbReference type="CDD" id="cd01556">
    <property type="entry name" value="EPSP_synthase"/>
    <property type="match status" value="1"/>
</dbReference>
<dbReference type="Gene3D" id="3.65.10.10">
    <property type="entry name" value="Enolpyruvate transferase domain"/>
    <property type="match status" value="2"/>
</dbReference>
<dbReference type="HAMAP" id="MF_00210">
    <property type="entry name" value="EPSP_synth"/>
    <property type="match status" value="1"/>
</dbReference>
<dbReference type="InterPro" id="IPR001986">
    <property type="entry name" value="Enolpyruvate_Tfrase_dom"/>
</dbReference>
<dbReference type="InterPro" id="IPR036968">
    <property type="entry name" value="Enolpyruvate_Tfrase_sf"/>
</dbReference>
<dbReference type="InterPro" id="IPR006264">
    <property type="entry name" value="EPSP_synthase"/>
</dbReference>
<dbReference type="InterPro" id="IPR023193">
    <property type="entry name" value="EPSP_synthase_CS"/>
</dbReference>
<dbReference type="InterPro" id="IPR013792">
    <property type="entry name" value="RNA3'P_cycl/enolpyr_Trfase_a/b"/>
</dbReference>
<dbReference type="PANTHER" id="PTHR21090">
    <property type="entry name" value="AROM/DEHYDROQUINATE SYNTHASE"/>
    <property type="match status" value="1"/>
</dbReference>
<dbReference type="PANTHER" id="PTHR21090:SF5">
    <property type="entry name" value="PENTAFUNCTIONAL AROM POLYPEPTIDE"/>
    <property type="match status" value="1"/>
</dbReference>
<dbReference type="Pfam" id="PF00275">
    <property type="entry name" value="EPSP_synthase"/>
    <property type="match status" value="1"/>
</dbReference>
<dbReference type="PIRSF" id="PIRSF000505">
    <property type="entry name" value="EPSPS"/>
    <property type="match status" value="1"/>
</dbReference>
<dbReference type="SUPFAM" id="SSF55205">
    <property type="entry name" value="EPT/RTPC-like"/>
    <property type="match status" value="1"/>
</dbReference>
<dbReference type="PROSITE" id="PS00885">
    <property type="entry name" value="EPSP_SYNTHASE_2"/>
    <property type="match status" value="1"/>
</dbReference>
<name>AROA_THEAC</name>
<organism>
    <name type="scientific">Thermoplasma acidophilum (strain ATCC 25905 / DSM 1728 / JCM 9062 / NBRC 15155 / AMRC-C165)</name>
    <dbReference type="NCBI Taxonomy" id="273075"/>
    <lineage>
        <taxon>Archaea</taxon>
        <taxon>Methanobacteriati</taxon>
        <taxon>Thermoplasmatota</taxon>
        <taxon>Thermoplasmata</taxon>
        <taxon>Thermoplasmatales</taxon>
        <taxon>Thermoplasmataceae</taxon>
        <taxon>Thermoplasma</taxon>
    </lineage>
</organism>
<feature type="chain" id="PRO_0000088339" description="3-phosphoshikimate 1-carboxyvinyltransferase">
    <location>
        <begin position="1"/>
        <end position="410"/>
    </location>
</feature>
<feature type="active site" description="Proton acceptor" evidence="1">
    <location>
        <position position="293"/>
    </location>
</feature>
<feature type="binding site" evidence="1">
    <location>
        <position position="20"/>
    </location>
    <ligand>
        <name>3-phosphoshikimate</name>
        <dbReference type="ChEBI" id="CHEBI:145989"/>
    </ligand>
</feature>
<feature type="binding site" evidence="1">
    <location>
        <position position="20"/>
    </location>
    <ligand>
        <name>phosphoenolpyruvate</name>
        <dbReference type="ChEBI" id="CHEBI:58702"/>
    </ligand>
</feature>
<feature type="binding site" evidence="1">
    <location>
        <position position="21"/>
    </location>
    <ligand>
        <name>3-phosphoshikimate</name>
        <dbReference type="ChEBI" id="CHEBI:145989"/>
    </ligand>
</feature>
<feature type="binding site" evidence="1">
    <location>
        <position position="25"/>
    </location>
    <ligand>
        <name>3-phosphoshikimate</name>
        <dbReference type="ChEBI" id="CHEBI:145989"/>
    </ligand>
</feature>
<feature type="binding site" evidence="1">
    <location>
        <position position="115"/>
    </location>
    <ligand>
        <name>phosphoenolpyruvate</name>
        <dbReference type="ChEBI" id="CHEBI:58702"/>
    </ligand>
</feature>
<feature type="binding site" evidence="1">
    <location>
        <position position="157"/>
    </location>
    <ligand>
        <name>3-phosphoshikimate</name>
        <dbReference type="ChEBI" id="CHEBI:145989"/>
    </ligand>
</feature>
<feature type="binding site" evidence="1">
    <location>
        <position position="158"/>
    </location>
    <ligand>
        <name>3-phosphoshikimate</name>
        <dbReference type="ChEBI" id="CHEBI:145989"/>
    </ligand>
</feature>
<feature type="binding site" evidence="1">
    <location>
        <position position="159"/>
    </location>
    <ligand>
        <name>3-phosphoshikimate</name>
        <dbReference type="ChEBI" id="CHEBI:145989"/>
    </ligand>
</feature>
<feature type="binding site" evidence="1">
    <location>
        <position position="159"/>
    </location>
    <ligand>
        <name>phosphoenolpyruvate</name>
        <dbReference type="ChEBI" id="CHEBI:58702"/>
    </ligand>
</feature>
<feature type="binding site" evidence="1">
    <location>
        <position position="183"/>
    </location>
    <ligand>
        <name>3-phosphoshikimate</name>
        <dbReference type="ChEBI" id="CHEBI:145989"/>
    </ligand>
</feature>
<feature type="binding site" evidence="1">
    <location>
        <position position="293"/>
    </location>
    <ligand>
        <name>3-phosphoshikimate</name>
        <dbReference type="ChEBI" id="CHEBI:145989"/>
    </ligand>
</feature>
<feature type="binding site" evidence="1">
    <location>
        <position position="320"/>
    </location>
    <ligand>
        <name>3-phosphoshikimate</name>
        <dbReference type="ChEBI" id="CHEBI:145989"/>
    </ligand>
</feature>
<feature type="binding site" evidence="1">
    <location>
        <position position="324"/>
    </location>
    <ligand>
        <name>phosphoenolpyruvate</name>
        <dbReference type="ChEBI" id="CHEBI:58702"/>
    </ligand>
</feature>
<feature type="binding site" evidence="1">
    <location>
        <position position="365"/>
    </location>
    <ligand>
        <name>phosphoenolpyruvate</name>
        <dbReference type="ChEBI" id="CHEBI:58702"/>
    </ligand>
</feature>
<feature type="binding site" evidence="1">
    <location>
        <position position="391"/>
    </location>
    <ligand>
        <name>phosphoenolpyruvate</name>
        <dbReference type="ChEBI" id="CHEBI:58702"/>
    </ligand>
</feature>
<evidence type="ECO:0000255" key="1">
    <source>
        <dbReference type="HAMAP-Rule" id="MF_00210"/>
    </source>
</evidence>
<evidence type="ECO:0000305" key="2"/>
<protein>
    <recommendedName>
        <fullName evidence="1">3-phosphoshikimate 1-carboxyvinyltransferase</fullName>
        <ecNumber evidence="1">2.5.1.19</ecNumber>
    </recommendedName>
    <alternativeName>
        <fullName evidence="1">5-enolpyruvylshikimate-3-phosphate synthase</fullName>
        <shortName evidence="1">EPSP synthase</shortName>
        <shortName evidence="1">EPSPS</shortName>
    </alternativeName>
</protein>
<reference key="1">
    <citation type="journal article" date="2000" name="Nature">
        <title>The genome sequence of the thermoacidophilic scavenger Thermoplasma acidophilum.</title>
        <authorList>
            <person name="Ruepp A."/>
            <person name="Graml W."/>
            <person name="Santos-Martinez M.-L."/>
            <person name="Koretke K.K."/>
            <person name="Volker C."/>
            <person name="Mewes H.-W."/>
            <person name="Frishman D."/>
            <person name="Stocker S."/>
            <person name="Lupas A.N."/>
            <person name="Baumeister W."/>
        </authorList>
    </citation>
    <scope>NUCLEOTIDE SEQUENCE [LARGE SCALE GENOMIC DNA]</scope>
    <source>
        <strain>ATCC 25905 / DSM 1728 / JCM 9062 / NBRC 15155 / AMRC-C165</strain>
    </source>
</reference>
<accession>Q9HLE6</accession>
<sequence>MTVKIYGSGGSGTVALPSSKSFTQRYILGSVFLNKSVTLNYVTITGDDSIALDIAQRAGANITMNDSSIKIRTSFTCPSDIYVGESATSYRIALGLLGSAGCITHVKGDPDLAKRPMDPLVKALEANDVHLKLNEDGFYDVDGSESKKRYIEVDGVSSQFVSSMIFYYARKGGGEFLVKNMRSPGYVYITKRVLYDLGYFVNIEKTITINPSGVWKTAIDVEPDYSSLAFFLVLGLLSENVDVRFNIKRMSRIQPDSVLLDMFKDNIAIDRDTLRVLPGIRDRITVDADHNPDLCPPISVIGIFSEHGVEIDNYARLKTKESNRYEGIIDMASRFGAIVEDNGKDLFIKRGDLKDPGTLSYTDHRMIMSAAVAAAASGFEVEIENETKVSKSFPGFFKELSKFANVSESN</sequence>
<proteinExistence type="inferred from homology"/>
<gene>
    <name evidence="1" type="primary">aroA</name>
    <name type="ordered locus">Ta0282</name>
</gene>
<keyword id="KW-0028">Amino-acid biosynthesis</keyword>
<keyword id="KW-0057">Aromatic amino acid biosynthesis</keyword>
<keyword id="KW-0963">Cytoplasm</keyword>
<keyword id="KW-1185">Reference proteome</keyword>
<keyword id="KW-0808">Transferase</keyword>